<reference key="1">
    <citation type="journal article" date="2004" name="Genome Res.">
        <title>The status, quality, and expansion of the NIH full-length cDNA project: the Mammalian Gene Collection (MGC).</title>
        <authorList>
            <consortium name="The MGC Project Team"/>
        </authorList>
    </citation>
    <scope>NUCLEOTIDE SEQUENCE [LARGE SCALE MRNA]</scope>
    <source>
        <tissue>Lung</tissue>
    </source>
</reference>
<sequence>MTRGLAPLLPIEFHKMGSFRRPRPRFMSSPLLSELPRFQAARQALQLSSNSAWNSVQTAVINVFKGGGLQSNELYALNESIRRLLKSELGSFITDYFQNQLLAKGLSFVEEKIKQCEGDNRIEVLAEVWDHFFTETLPTLQAIFYPVQGQELTIRQISLLGFRDLVLLKVKLGDLLLLSQSKLPSSVIQMLLILQSVHEPTGPSEGYLQLEELVKQVVSPFLGLSGDRSCSRPTHSLARRHSRVRPKVTVLNYASLMTTVGRPLNEMVLTPLTEQEGEAYLEKCGSVRRHTVANAHSDIQLLAMATMMHSGLGEESGSEDKHLLLPPTFPPPHRQCSSEPSILDSPDEMELEDVASGSQEDSELNCASLS</sequence>
<proteinExistence type="evidence at transcript level"/>
<protein>
    <recommendedName>
        <fullName>Proline-rich protein 5-like</fullName>
    </recommendedName>
    <alternativeName>
        <fullName>Protein observed with Rictor-2</fullName>
        <shortName>Protor-2</shortName>
    </alternativeName>
</protein>
<dbReference type="EMBL" id="BC129104">
    <property type="protein sequence ID" value="AAI29105.1"/>
    <property type="molecule type" value="mRNA"/>
</dbReference>
<dbReference type="RefSeq" id="NP_001073619.1">
    <property type="nucleotide sequence ID" value="NM_001080150.1"/>
</dbReference>
<dbReference type="SMR" id="A1L1K1"/>
<dbReference type="FunCoup" id="A1L1K1">
    <property type="interactions" value="353"/>
</dbReference>
<dbReference type="STRING" id="10116.ENSRNOP00000006291"/>
<dbReference type="PhosphoSitePlus" id="A1L1K1"/>
<dbReference type="PaxDb" id="10116-ENSRNOP00000006291"/>
<dbReference type="GeneID" id="362171"/>
<dbReference type="KEGG" id="rno:362171"/>
<dbReference type="UCSC" id="RGD:1309969">
    <property type="organism name" value="rat"/>
</dbReference>
<dbReference type="AGR" id="RGD:1309969"/>
<dbReference type="CTD" id="79899"/>
<dbReference type="RGD" id="1309969">
    <property type="gene designation" value="Prr5l"/>
</dbReference>
<dbReference type="eggNOG" id="ENOG502QSM7">
    <property type="taxonomic scope" value="Eukaryota"/>
</dbReference>
<dbReference type="InParanoid" id="A1L1K1"/>
<dbReference type="OrthoDB" id="2290221at2759"/>
<dbReference type="PhylomeDB" id="A1L1K1"/>
<dbReference type="PRO" id="PR:A1L1K1"/>
<dbReference type="Proteomes" id="UP000002494">
    <property type="component" value="Unplaced"/>
</dbReference>
<dbReference type="GO" id="GO:0031932">
    <property type="term" value="C:TORC2 complex"/>
    <property type="evidence" value="ECO:0000250"/>
    <property type="project" value="UniProtKB"/>
</dbReference>
<dbReference type="GO" id="GO:0031625">
    <property type="term" value="F:ubiquitin protein ligase binding"/>
    <property type="evidence" value="ECO:0000266"/>
    <property type="project" value="RGD"/>
</dbReference>
<dbReference type="GO" id="GO:0034599">
    <property type="term" value="P:cellular response to oxidative stress"/>
    <property type="evidence" value="ECO:0000250"/>
    <property type="project" value="UniProtKB"/>
</dbReference>
<dbReference type="GO" id="GO:0001933">
    <property type="term" value="P:negative regulation of protein phosphorylation"/>
    <property type="evidence" value="ECO:0000250"/>
    <property type="project" value="UniProtKB"/>
</dbReference>
<dbReference type="GO" id="GO:0009968">
    <property type="term" value="P:negative regulation of signal transduction"/>
    <property type="evidence" value="ECO:0007669"/>
    <property type="project" value="UniProtKB-KW"/>
</dbReference>
<dbReference type="GO" id="GO:0043491">
    <property type="term" value="P:phosphatidylinositol 3-kinase/protein kinase B signal transduction"/>
    <property type="evidence" value="ECO:0000266"/>
    <property type="project" value="RGD"/>
</dbReference>
<dbReference type="GO" id="GO:0090316">
    <property type="term" value="P:positive regulation of intracellular protein transport"/>
    <property type="evidence" value="ECO:0000250"/>
    <property type="project" value="UniProtKB"/>
</dbReference>
<dbReference type="GO" id="GO:0061014">
    <property type="term" value="P:positive regulation of mRNA catabolic process"/>
    <property type="evidence" value="ECO:0000250"/>
    <property type="project" value="UniProtKB"/>
</dbReference>
<dbReference type="GO" id="GO:0051897">
    <property type="term" value="P:positive regulation of phosphatidylinositol 3-kinase/protein kinase B signal transduction"/>
    <property type="evidence" value="ECO:0000266"/>
    <property type="project" value="RGD"/>
</dbReference>
<dbReference type="GO" id="GO:0010762">
    <property type="term" value="P:regulation of fibroblast migration"/>
    <property type="evidence" value="ECO:0000250"/>
    <property type="project" value="UniProtKB"/>
</dbReference>
<dbReference type="GO" id="GO:0038203">
    <property type="term" value="P:TORC2 signaling"/>
    <property type="evidence" value="ECO:0000250"/>
    <property type="project" value="UniProtKB"/>
</dbReference>
<dbReference type="InterPro" id="IPR013745">
    <property type="entry name" value="Bit61/PRR5"/>
</dbReference>
<dbReference type="PANTHER" id="PTHR32428:SF3">
    <property type="entry name" value="PROLINE-RICH PROTEIN 5-LIKE"/>
    <property type="match status" value="1"/>
</dbReference>
<dbReference type="PANTHER" id="PTHR32428">
    <property type="entry name" value="TARGET OF RAPAMYCIN COMPLEX 2 SUBUNIT BIT61-RELATED"/>
    <property type="match status" value="1"/>
</dbReference>
<dbReference type="Pfam" id="PF08539">
    <property type="entry name" value="HbrB"/>
    <property type="match status" value="1"/>
</dbReference>
<name>PRR5L_RAT</name>
<gene>
    <name type="primary">Prr5l</name>
    <name type="synonym">Protor2</name>
</gene>
<organism>
    <name type="scientific">Rattus norvegicus</name>
    <name type="common">Rat</name>
    <dbReference type="NCBI Taxonomy" id="10116"/>
    <lineage>
        <taxon>Eukaryota</taxon>
        <taxon>Metazoa</taxon>
        <taxon>Chordata</taxon>
        <taxon>Craniata</taxon>
        <taxon>Vertebrata</taxon>
        <taxon>Euteleostomi</taxon>
        <taxon>Mammalia</taxon>
        <taxon>Eutheria</taxon>
        <taxon>Euarchontoglires</taxon>
        <taxon>Glires</taxon>
        <taxon>Rodentia</taxon>
        <taxon>Myomorpha</taxon>
        <taxon>Muroidea</taxon>
        <taxon>Muridae</taxon>
        <taxon>Murinae</taxon>
        <taxon>Rattus</taxon>
    </lineage>
</organism>
<comment type="function">
    <text evidence="3">Associates with the mTORC2 complex that regulates cellular processes including survival and organization of the cytoskeleton. Regulates the activity of the mTORC2 complex in a substrate-specific manner preventing for instance the specific phosphorylation of PKCs and thereby controlling cell migration. Plays a role in the stimulation of ZFP36-mediated mRNA decay of several ZFP36-associated mRNAs, such as TNF-alpha and GM-CSF, in response to stress. Required for ZFP36 localization to cytoplasmic stress granule (SG) and P-body (PB) in response to stress.</text>
</comment>
<comment type="subunit">
    <text evidence="3">Interacts with the mammalian target of rapamycin complex 2 (mTORC2) which contains MTOR, MLST8, PRR5, RICTOR, MAPKAP1 and DEPTOR. Interacts with RFFL. Interacts (via C-terminus) with ZFP36 (via C-terminus); this interaction may accelerate ZFP36-mediated mRNA decay during stress. Interacts with RICTOR.</text>
</comment>
<comment type="PTM">
    <text evidence="1">Ubiquitinated. Ubiquitination by RFFL promotes proteasomal degradation of PRR5L thereby modifying the substrate-specific activity of the mTORC2 complex. Ubiquitination by RFFL is stimulated by LPA/lysophosphatidic acid (By similarity).</text>
</comment>
<comment type="similarity">
    <text evidence="5">Belongs to the PROTOR family.</text>
</comment>
<keyword id="KW-0597">Phosphoprotein</keyword>
<keyword id="KW-1185">Reference proteome</keyword>
<keyword id="KW-0734">Signal transduction inhibitor</keyword>
<keyword id="KW-0832">Ubl conjugation</keyword>
<accession>A1L1K1</accession>
<feature type="chain" id="PRO_0000332711" description="Proline-rich protein 5-like">
    <location>
        <begin position="1"/>
        <end position="370"/>
    </location>
</feature>
<feature type="region of interest" description="Disordered" evidence="4">
    <location>
        <begin position="327"/>
        <end position="370"/>
    </location>
</feature>
<feature type="modified residue" description="Phosphoserine" evidence="2">
    <location>
        <position position="28"/>
    </location>
</feature>
<evidence type="ECO:0000250" key="1"/>
<evidence type="ECO:0000250" key="2">
    <source>
        <dbReference type="UniProtKB" id="A2AVJ5"/>
    </source>
</evidence>
<evidence type="ECO:0000250" key="3">
    <source>
        <dbReference type="UniProtKB" id="Q6MZQ0"/>
    </source>
</evidence>
<evidence type="ECO:0000256" key="4">
    <source>
        <dbReference type="SAM" id="MobiDB-lite"/>
    </source>
</evidence>
<evidence type="ECO:0000305" key="5"/>